<proteinExistence type="inferred from homology"/>
<feature type="chain" id="PRO_0000427648" description="Uncharacterized oxidoreductase MT3518">
    <location>
        <begin position="1"/>
        <end position="375"/>
    </location>
</feature>
<keyword id="KW-0520">NAD</keyword>
<keyword id="KW-0560">Oxidoreductase</keyword>
<keyword id="KW-1185">Reference proteome</keyword>
<evidence type="ECO:0000305" key="1"/>
<name>Y3410_MYCTO</name>
<sequence length="375" mass="38991">MVEIGMGRTARRTYELSEISIVPSRRTRSSKDVSTAWQLDAYRFEIPVVAHPTDALVSPEFAIELGRLGGLGVLNGEGLIGRHLDVEAKIAQLLEAAAADPEPSTAIRLLQELHAAPLNPDLLGAAVARIREAGVTTAVRVSPQNAQWLTPVLVAAGIDLLVIQGTIVSAERVASDGEPLNLKTFISELDIPVVAGGVLDHRTALHLMRTGAAGVIVGYGSTQGVTTTDEVLGISVPMATAIADAAAARRDYLDETGGRYVHVLADGDIHTSGELAKAIACGADAVVLGTPLAESAEALGEGWFWPAAAAHPSLPRGALLQIAVGERPPLARVLGGPSDDPFGGLNLVGGLRRSMAKAGYCDLKEFQKVGLTVGG</sequence>
<gene>
    <name type="primary">guaB3</name>
    <name type="ordered locus">MT3518</name>
</gene>
<protein>
    <recommendedName>
        <fullName>Uncharacterized oxidoreductase MT3518</fullName>
        <ecNumber>1.-.-.-</ecNumber>
    </recommendedName>
</protein>
<dbReference type="EC" id="1.-.-.-"/>
<dbReference type="EMBL" id="AE000516">
    <property type="protein sequence ID" value="AAK47856.1"/>
    <property type="molecule type" value="Genomic_DNA"/>
</dbReference>
<dbReference type="PIR" id="G70736">
    <property type="entry name" value="G70736"/>
</dbReference>
<dbReference type="RefSeq" id="WP_003418005.1">
    <property type="nucleotide sequence ID" value="NZ_KK341227.1"/>
</dbReference>
<dbReference type="SMR" id="P9WKI4"/>
<dbReference type="KEGG" id="mtc:MT3518"/>
<dbReference type="PATRIC" id="fig|83331.31.peg.3776"/>
<dbReference type="HOGENOM" id="CLU_064068_0_0_11"/>
<dbReference type="Proteomes" id="UP000001020">
    <property type="component" value="Chromosome"/>
</dbReference>
<dbReference type="GO" id="GO:0003938">
    <property type="term" value="F:IMP dehydrogenase activity"/>
    <property type="evidence" value="ECO:0007669"/>
    <property type="project" value="InterPro"/>
</dbReference>
<dbReference type="GO" id="GO:0006183">
    <property type="term" value="P:GTP biosynthetic process"/>
    <property type="evidence" value="ECO:0007669"/>
    <property type="project" value="TreeGrafter"/>
</dbReference>
<dbReference type="FunFam" id="3.20.20.70:FF:000060">
    <property type="entry name" value="IMP dehydrogenase subunit"/>
    <property type="match status" value="1"/>
</dbReference>
<dbReference type="Gene3D" id="3.20.20.70">
    <property type="entry name" value="Aldolase class I"/>
    <property type="match status" value="1"/>
</dbReference>
<dbReference type="InterPro" id="IPR013785">
    <property type="entry name" value="Aldolase_TIM"/>
</dbReference>
<dbReference type="InterPro" id="IPR005990">
    <property type="entry name" value="IMP_DH"/>
</dbReference>
<dbReference type="InterPro" id="IPR005992">
    <property type="entry name" value="IMP_DH-rel2"/>
</dbReference>
<dbReference type="InterPro" id="IPR001093">
    <property type="entry name" value="IMP_DH_GMPRt"/>
</dbReference>
<dbReference type="NCBIfam" id="TIGR01304">
    <property type="entry name" value="IMP_DH_rel_2"/>
    <property type="match status" value="1"/>
</dbReference>
<dbReference type="PANTHER" id="PTHR11911:SF111">
    <property type="entry name" value="INOSINE-5'-MONOPHOSPHATE DEHYDROGENASE"/>
    <property type="match status" value="1"/>
</dbReference>
<dbReference type="PANTHER" id="PTHR11911">
    <property type="entry name" value="INOSINE-5-MONOPHOSPHATE DEHYDROGENASE RELATED"/>
    <property type="match status" value="1"/>
</dbReference>
<dbReference type="Pfam" id="PF00478">
    <property type="entry name" value="IMPDH"/>
    <property type="match status" value="1"/>
</dbReference>
<dbReference type="SMART" id="SM01240">
    <property type="entry name" value="IMPDH"/>
    <property type="match status" value="1"/>
</dbReference>
<dbReference type="SUPFAM" id="SSF51412">
    <property type="entry name" value="Inosine monophosphate dehydrogenase (IMPDH)"/>
    <property type="match status" value="1"/>
</dbReference>
<accession>P9WKI4</accession>
<accession>L0TE22</accession>
<accession>P65170</accession>
<accession>Q50716</accession>
<reference key="1">
    <citation type="journal article" date="2002" name="J. Bacteriol.">
        <title>Whole-genome comparison of Mycobacterium tuberculosis clinical and laboratory strains.</title>
        <authorList>
            <person name="Fleischmann R.D."/>
            <person name="Alland D."/>
            <person name="Eisen J.A."/>
            <person name="Carpenter L."/>
            <person name="White O."/>
            <person name="Peterson J.D."/>
            <person name="DeBoy R.T."/>
            <person name="Dodson R.J."/>
            <person name="Gwinn M.L."/>
            <person name="Haft D.H."/>
            <person name="Hickey E.K."/>
            <person name="Kolonay J.F."/>
            <person name="Nelson W.C."/>
            <person name="Umayam L.A."/>
            <person name="Ermolaeva M.D."/>
            <person name="Salzberg S.L."/>
            <person name="Delcher A."/>
            <person name="Utterback T.R."/>
            <person name="Weidman J.F."/>
            <person name="Khouri H.M."/>
            <person name="Gill J."/>
            <person name="Mikula A."/>
            <person name="Bishai W."/>
            <person name="Jacobs W.R. Jr."/>
            <person name="Venter J.C."/>
            <person name="Fraser C.M."/>
        </authorList>
    </citation>
    <scope>NUCLEOTIDE SEQUENCE [LARGE SCALE GENOMIC DNA]</scope>
    <source>
        <strain>CDC 1551 / Oshkosh</strain>
    </source>
</reference>
<organism>
    <name type="scientific">Mycobacterium tuberculosis (strain CDC 1551 / Oshkosh)</name>
    <dbReference type="NCBI Taxonomy" id="83331"/>
    <lineage>
        <taxon>Bacteria</taxon>
        <taxon>Bacillati</taxon>
        <taxon>Actinomycetota</taxon>
        <taxon>Actinomycetes</taxon>
        <taxon>Mycobacteriales</taxon>
        <taxon>Mycobacteriaceae</taxon>
        <taxon>Mycobacterium</taxon>
        <taxon>Mycobacterium tuberculosis complex</taxon>
    </lineage>
</organism>
<comment type="similarity">
    <text evidence="1">Belongs to the IMPDH/GMPR family.</text>
</comment>